<dbReference type="EC" id="1.2.5.2"/>
<dbReference type="SMR" id="P80472"/>
<dbReference type="GO" id="GO:0047113">
    <property type="term" value="F:aldehyde dehydrogenase (quinone) activity"/>
    <property type="evidence" value="ECO:0007669"/>
    <property type="project" value="UniProtKB-EC"/>
</dbReference>
<dbReference type="Gene3D" id="3.30.43.10">
    <property type="entry name" value="Uridine Diphospho-n-acetylenolpyruvylglucosamine Reductase, domain 2"/>
    <property type="match status" value="1"/>
</dbReference>
<dbReference type="InterPro" id="IPR016167">
    <property type="entry name" value="FAD-bd_PCMH_sub1"/>
</dbReference>
<reference key="1">
    <citation type="journal article" date="1996" name="Arch. Biochem. Biophys.">
        <title>A second molybdoprotein aldehyde dehydrogenase from Amycolatopsis methanolica NCIB 11946.</title>
        <authorList>
            <person name="Kim S.W."/>
            <person name="Luykx D.M.A.M."/>
            <person name="de Vries S."/>
            <person name="Duine J.A."/>
        </authorList>
    </citation>
    <scope>PROTEIN SEQUENCE</scope>
    <scope>COFACTOR</scope>
    <source>
        <strain>DSM 44096 / JCM 8087 / NBRC 15065 / NCIMB 11946 / NRRL B-24139 / LMD 80.32 / 239</strain>
    </source>
</reference>
<feature type="chain" id="PRO_0000063245" description="Aldehyde dehydrogenase beta chain">
    <location>
        <begin position="1"/>
        <end position="26" status="greater than"/>
    </location>
</feature>
<feature type="non-terminal residue">
    <location>
        <position position="26"/>
    </location>
</feature>
<comment type="catalytic activity">
    <reaction>
        <text>an aldehyde + a quinone + H2O = a quinol + a carboxylate + H(+)</text>
        <dbReference type="Rhea" id="RHEA:13881"/>
        <dbReference type="ChEBI" id="CHEBI:15377"/>
        <dbReference type="ChEBI" id="CHEBI:15378"/>
        <dbReference type="ChEBI" id="CHEBI:17478"/>
        <dbReference type="ChEBI" id="CHEBI:24646"/>
        <dbReference type="ChEBI" id="CHEBI:29067"/>
        <dbReference type="ChEBI" id="CHEBI:132124"/>
        <dbReference type="EC" id="1.2.5.2"/>
    </reaction>
</comment>
<comment type="cofactor">
    <cofactor evidence="1">
        <name>FAD</name>
        <dbReference type="ChEBI" id="CHEBI:57692"/>
    </cofactor>
    <text evidence="1">Binds 1 FAD per subunit.</text>
</comment>
<comment type="subunit">
    <text>Heterotrimer composed of an alpha, a beta and a gamma chain.</text>
</comment>
<organism>
    <name type="scientific">Amycolatopsis methanolica</name>
    <dbReference type="NCBI Taxonomy" id="1814"/>
    <lineage>
        <taxon>Bacteria</taxon>
        <taxon>Bacillati</taxon>
        <taxon>Actinomycetota</taxon>
        <taxon>Actinomycetes</taxon>
        <taxon>Pseudonocardiales</taxon>
        <taxon>Pseudonocardiaceae</taxon>
        <taxon>Amycolatopsis</taxon>
        <taxon>Amycolatopsis methanolica group</taxon>
    </lineage>
</organism>
<keyword id="KW-0903">Direct protein sequencing</keyword>
<keyword id="KW-0274">FAD</keyword>
<keyword id="KW-0285">Flavoprotein</keyword>
<keyword id="KW-0560">Oxidoreductase</keyword>
<sequence length="26" mass="2834">MIPAQFTYRRVSSVDEALAAVAEHGD</sequence>
<proteinExistence type="evidence at protein level"/>
<evidence type="ECO:0000269" key="1">
    <source>
    </source>
</evidence>
<name>DHAB_AMYME</name>
<protein>
    <recommendedName>
        <fullName>Aldehyde dehydrogenase beta chain</fullName>
        <shortName>ALDH</shortName>
        <ecNumber>1.2.5.2</ecNumber>
    </recommendedName>
</protein>
<accession>P80472</accession>